<feature type="chain" id="PRO_0000076396" description="UPF0313 protein YgiQ">
    <location>
        <begin position="1"/>
        <end position="739"/>
    </location>
</feature>
<feature type="domain" description="Radical SAM core" evidence="2">
    <location>
        <begin position="372"/>
        <end position="650"/>
    </location>
</feature>
<feature type="region of interest" description="Disordered" evidence="3">
    <location>
        <begin position="685"/>
        <end position="739"/>
    </location>
</feature>
<feature type="compositionally biased region" description="Polar residues" evidence="3">
    <location>
        <begin position="704"/>
        <end position="724"/>
    </location>
</feature>
<feature type="compositionally biased region" description="Basic residues" evidence="3">
    <location>
        <begin position="729"/>
        <end position="739"/>
    </location>
</feature>
<feature type="binding site" evidence="1">
    <location>
        <position position="386"/>
    </location>
    <ligand>
        <name>[4Fe-4S] cluster</name>
        <dbReference type="ChEBI" id="CHEBI:49883"/>
        <note>4Fe-4S-S-AdoMet</note>
    </ligand>
</feature>
<feature type="binding site" evidence="1">
    <location>
        <position position="390"/>
    </location>
    <ligand>
        <name>[4Fe-4S] cluster</name>
        <dbReference type="ChEBI" id="CHEBI:49883"/>
        <note>4Fe-4S-S-AdoMet</note>
    </ligand>
</feature>
<feature type="binding site" evidence="1">
    <location>
        <position position="393"/>
    </location>
    <ligand>
        <name>[4Fe-4S] cluster</name>
        <dbReference type="ChEBI" id="CHEBI:49883"/>
        <note>4Fe-4S-S-AdoMet</note>
    </ligand>
</feature>
<organism>
    <name type="scientific">Shigella flexneri</name>
    <dbReference type="NCBI Taxonomy" id="623"/>
    <lineage>
        <taxon>Bacteria</taxon>
        <taxon>Pseudomonadati</taxon>
        <taxon>Pseudomonadota</taxon>
        <taxon>Gammaproteobacteria</taxon>
        <taxon>Enterobacterales</taxon>
        <taxon>Enterobacteriaceae</taxon>
        <taxon>Shigella</taxon>
    </lineage>
</organism>
<sequence>MSSISLIQPDRDLFSWPQYWAACFGPAPFLPMSREEMDQLGWDSCDIILVTGDAYVDHPSFGMAICGRMLEAQGFRVGIIAQPDWSSKDDFMRLGKPNLFFGVTAGNMDSMINRYTADRRLRHDDAYTPDNVAGKRPDRATLVYTQRCKEAWKDVPVILGGIEASLRRTAHYDYWSDTVRRSVLVDSKADMLMFGNGERPLVEVAHRLAMGEPISEIRDVRNTAIIVKEALPGWSGVDSTRLDTLGKIDPIPHPYGEDLPCADNKPVAPKKQEAKAVIVQPPRQKPWEKTYVLLPSFEKVKGDKVLYAHASRILHHETNPGCARALMQKHGDRYVWINPPAIPLSTEEMDSVFALPYKRVPHPAYGNARIPAYEMIRFSVNIMRGCFGGCSFCSITEHEGRIIQSRSEDSIINEIEAIRDTVPGFTGVISDLGGPTANMYMLRCKSPRAEQTCRRLSCVYPDICPHMDTNHEPTINLYRRARDLKGIKKILIASGVRYDIAVEDPRYIKELATHHVGGYLKIAPEHTEEGPLSKMMKPGMGSYDRFKELFDTYSKQAGKEQYLIPYFISAHPGTRDEDMVNLALWLKKHRFRLDQVQNFYPSPLANSTTMYYTGKKPLAKIGYKSEGVFVPKGDKQRRLHKALLRYHDPANWPLIRQALEAMGKKHLIGSRRDCLVPAPTIEEMREARRQNRNTRPALTKHTPMATQRQTPATAKKASSTQSRPVNAGAKKRPKAAVGR</sequence>
<accession>Q83JL2</accession>
<accession>Q7UBJ9</accession>
<comment type="cofactor">
    <cofactor evidence="1">
        <name>[4Fe-4S] cluster</name>
        <dbReference type="ChEBI" id="CHEBI:49883"/>
    </cofactor>
    <text evidence="1">Binds 1 [4Fe-4S] cluster. The cluster is coordinated with 3 cysteines and an exchangeable S-adenosyl-L-methionine.</text>
</comment>
<comment type="similarity">
    <text evidence="1">Belongs to the UPF0313 family.</text>
</comment>
<comment type="sequence caution" evidence="4">
    <conflict type="erroneous initiation">
        <sequence resource="EMBL-CDS" id="AAN44538"/>
    </conflict>
    <text>Truncated N-terminus.</text>
</comment>
<comment type="sequence caution" evidence="4">
    <conflict type="erroneous initiation">
        <sequence resource="EMBL-CDS" id="AAP18350"/>
    </conflict>
    <text>Truncated N-terminus.</text>
</comment>
<proteinExistence type="inferred from homology"/>
<dbReference type="EMBL" id="AE005674">
    <property type="protein sequence ID" value="AAN44538.2"/>
    <property type="status" value="ALT_INIT"/>
    <property type="molecule type" value="Genomic_DNA"/>
</dbReference>
<dbReference type="EMBL" id="AE014073">
    <property type="protein sequence ID" value="AAP18350.1"/>
    <property type="status" value="ALT_INIT"/>
    <property type="molecule type" value="Genomic_DNA"/>
</dbReference>
<dbReference type="RefSeq" id="WP_000095159.1">
    <property type="nucleotide sequence ID" value="NZ_WPGW01000034.1"/>
</dbReference>
<dbReference type="STRING" id="198214.SF3060"/>
<dbReference type="PaxDb" id="198214-SF3060"/>
<dbReference type="KEGG" id="sfx:S3263"/>
<dbReference type="PATRIC" id="fig|623.158.peg.3348"/>
<dbReference type="HOGENOM" id="CLU_018288_1_1_6"/>
<dbReference type="Proteomes" id="UP000001006">
    <property type="component" value="Chromosome"/>
</dbReference>
<dbReference type="Proteomes" id="UP000002673">
    <property type="component" value="Chromosome"/>
</dbReference>
<dbReference type="GO" id="GO:0051539">
    <property type="term" value="F:4 iron, 4 sulfur cluster binding"/>
    <property type="evidence" value="ECO:0007669"/>
    <property type="project" value="UniProtKB-KW"/>
</dbReference>
<dbReference type="GO" id="GO:0003824">
    <property type="term" value="F:catalytic activity"/>
    <property type="evidence" value="ECO:0007669"/>
    <property type="project" value="InterPro"/>
</dbReference>
<dbReference type="GO" id="GO:0005506">
    <property type="term" value="F:iron ion binding"/>
    <property type="evidence" value="ECO:0007669"/>
    <property type="project" value="UniProtKB-UniRule"/>
</dbReference>
<dbReference type="Gene3D" id="3.80.30.20">
    <property type="entry name" value="tm_1862 like domain"/>
    <property type="match status" value="1"/>
</dbReference>
<dbReference type="HAMAP" id="MF_01251">
    <property type="entry name" value="UPF0313"/>
    <property type="match status" value="1"/>
</dbReference>
<dbReference type="InterPro" id="IPR006638">
    <property type="entry name" value="Elp3/MiaA/NifB-like_rSAM"/>
</dbReference>
<dbReference type="InterPro" id="IPR020612">
    <property type="entry name" value="Methylthiotransferase_CS"/>
</dbReference>
<dbReference type="InterPro" id="IPR007197">
    <property type="entry name" value="rSAM"/>
</dbReference>
<dbReference type="InterPro" id="IPR023404">
    <property type="entry name" value="rSAM_horseshoe"/>
</dbReference>
<dbReference type="InterPro" id="IPR022946">
    <property type="entry name" value="UPF0313"/>
</dbReference>
<dbReference type="InterPro" id="IPR024560">
    <property type="entry name" value="UPF0313_C"/>
</dbReference>
<dbReference type="InterPro" id="IPR013704">
    <property type="entry name" value="UPF0313_N"/>
</dbReference>
<dbReference type="NCBIfam" id="TIGR03904">
    <property type="entry name" value="SAM_YgiQ"/>
    <property type="match status" value="1"/>
</dbReference>
<dbReference type="PANTHER" id="PTHR32331">
    <property type="entry name" value="UPF0313 PROTEIN YGIQ"/>
    <property type="match status" value="1"/>
</dbReference>
<dbReference type="PANTHER" id="PTHR32331:SF0">
    <property type="entry name" value="UPF0313 PROTEIN YGIQ"/>
    <property type="match status" value="1"/>
</dbReference>
<dbReference type="Pfam" id="PF11842">
    <property type="entry name" value="DUF3362"/>
    <property type="match status" value="1"/>
</dbReference>
<dbReference type="Pfam" id="PF04055">
    <property type="entry name" value="Radical_SAM"/>
    <property type="match status" value="1"/>
</dbReference>
<dbReference type="Pfam" id="PF08497">
    <property type="entry name" value="Radical_SAM_N"/>
    <property type="match status" value="1"/>
</dbReference>
<dbReference type="SFLD" id="SFLDG01082">
    <property type="entry name" value="B12-binding_domain_containing"/>
    <property type="match status" value="1"/>
</dbReference>
<dbReference type="SFLD" id="SFLDS00029">
    <property type="entry name" value="Radical_SAM"/>
    <property type="match status" value="1"/>
</dbReference>
<dbReference type="SFLD" id="SFLDG01069">
    <property type="entry name" value="UPF0313"/>
    <property type="match status" value="1"/>
</dbReference>
<dbReference type="SMART" id="SM00729">
    <property type="entry name" value="Elp3"/>
    <property type="match status" value="1"/>
</dbReference>
<dbReference type="SUPFAM" id="SSF102114">
    <property type="entry name" value="Radical SAM enzymes"/>
    <property type="match status" value="1"/>
</dbReference>
<dbReference type="PROSITE" id="PS51918">
    <property type="entry name" value="RADICAL_SAM"/>
    <property type="match status" value="1"/>
</dbReference>
<name>YGIQ_SHIFL</name>
<evidence type="ECO:0000255" key="1">
    <source>
        <dbReference type="HAMAP-Rule" id="MF_01251"/>
    </source>
</evidence>
<evidence type="ECO:0000255" key="2">
    <source>
        <dbReference type="PROSITE-ProRule" id="PRU01266"/>
    </source>
</evidence>
<evidence type="ECO:0000256" key="3">
    <source>
        <dbReference type="SAM" id="MobiDB-lite"/>
    </source>
</evidence>
<evidence type="ECO:0000305" key="4"/>
<reference key="1">
    <citation type="journal article" date="2002" name="Nucleic Acids Res.">
        <title>Genome sequence of Shigella flexneri 2a: insights into pathogenicity through comparison with genomes of Escherichia coli K12 and O157.</title>
        <authorList>
            <person name="Jin Q."/>
            <person name="Yuan Z."/>
            <person name="Xu J."/>
            <person name="Wang Y."/>
            <person name="Shen Y."/>
            <person name="Lu W."/>
            <person name="Wang J."/>
            <person name="Liu H."/>
            <person name="Yang J."/>
            <person name="Yang F."/>
            <person name="Zhang X."/>
            <person name="Zhang J."/>
            <person name="Yang G."/>
            <person name="Wu H."/>
            <person name="Qu D."/>
            <person name="Dong J."/>
            <person name="Sun L."/>
            <person name="Xue Y."/>
            <person name="Zhao A."/>
            <person name="Gao Y."/>
            <person name="Zhu J."/>
            <person name="Kan B."/>
            <person name="Ding K."/>
            <person name="Chen S."/>
            <person name="Cheng H."/>
            <person name="Yao Z."/>
            <person name="He B."/>
            <person name="Chen R."/>
            <person name="Ma D."/>
            <person name="Qiang B."/>
            <person name="Wen Y."/>
            <person name="Hou Y."/>
            <person name="Yu J."/>
        </authorList>
    </citation>
    <scope>NUCLEOTIDE SEQUENCE [LARGE SCALE GENOMIC DNA]</scope>
    <source>
        <strain>301 / Serotype 2a</strain>
    </source>
</reference>
<reference key="2">
    <citation type="journal article" date="2003" name="Infect. Immun.">
        <title>Complete genome sequence and comparative genomics of Shigella flexneri serotype 2a strain 2457T.</title>
        <authorList>
            <person name="Wei J."/>
            <person name="Goldberg M.B."/>
            <person name="Burland V."/>
            <person name="Venkatesan M.M."/>
            <person name="Deng W."/>
            <person name="Fournier G."/>
            <person name="Mayhew G.F."/>
            <person name="Plunkett G. III"/>
            <person name="Rose D.J."/>
            <person name="Darling A."/>
            <person name="Mau B."/>
            <person name="Perna N.T."/>
            <person name="Payne S.M."/>
            <person name="Runyen-Janecky L.J."/>
            <person name="Zhou S."/>
            <person name="Schwartz D.C."/>
            <person name="Blattner F.R."/>
        </authorList>
    </citation>
    <scope>NUCLEOTIDE SEQUENCE [LARGE SCALE GENOMIC DNA]</scope>
    <source>
        <strain>ATCC 700930 / 2457T / Serotype 2a</strain>
    </source>
</reference>
<gene>
    <name evidence="1" type="primary">ygiQ</name>
    <name type="ordered locus">SF3060</name>
    <name type="ordered locus">S3263</name>
</gene>
<protein>
    <recommendedName>
        <fullName evidence="1">UPF0313 protein YgiQ</fullName>
    </recommendedName>
</protein>
<keyword id="KW-0004">4Fe-4S</keyword>
<keyword id="KW-0408">Iron</keyword>
<keyword id="KW-0411">Iron-sulfur</keyword>
<keyword id="KW-0479">Metal-binding</keyword>
<keyword id="KW-1185">Reference proteome</keyword>
<keyword id="KW-0949">S-adenosyl-L-methionine</keyword>